<proteinExistence type="inferred from homology"/>
<reference key="1">
    <citation type="submission" date="2008-02" db="EMBL/GenBank/DDBJ databases">
        <title>Complete sequence of Pseudomonas putida W619.</title>
        <authorList>
            <person name="Copeland A."/>
            <person name="Lucas S."/>
            <person name="Lapidus A."/>
            <person name="Barry K."/>
            <person name="Detter J.C."/>
            <person name="Glavina del Rio T."/>
            <person name="Dalin E."/>
            <person name="Tice H."/>
            <person name="Pitluck S."/>
            <person name="Chain P."/>
            <person name="Malfatti S."/>
            <person name="Shin M."/>
            <person name="Vergez L."/>
            <person name="Schmutz J."/>
            <person name="Larimer F."/>
            <person name="Land M."/>
            <person name="Hauser L."/>
            <person name="Kyrpides N."/>
            <person name="Kim E."/>
            <person name="Taghavi S."/>
            <person name="Vangronsveld D."/>
            <person name="van der Lelie D."/>
            <person name="Richardson P."/>
        </authorList>
    </citation>
    <scope>NUCLEOTIDE SEQUENCE [LARGE SCALE GENOMIC DNA]</scope>
    <source>
        <strain>W619</strain>
    </source>
</reference>
<protein>
    <recommendedName>
        <fullName evidence="1">DNA replication and repair protein RecF</fullName>
    </recommendedName>
</protein>
<dbReference type="EMBL" id="CP000949">
    <property type="protein sequence ID" value="ACA70509.1"/>
    <property type="molecule type" value="Genomic_DNA"/>
</dbReference>
<dbReference type="SMR" id="B1J3Y4"/>
<dbReference type="STRING" id="390235.PputW619_0003"/>
<dbReference type="KEGG" id="ppw:PputW619_0003"/>
<dbReference type="eggNOG" id="COG1195">
    <property type="taxonomic scope" value="Bacteria"/>
</dbReference>
<dbReference type="HOGENOM" id="CLU_040267_0_0_6"/>
<dbReference type="OrthoDB" id="9803889at2"/>
<dbReference type="GO" id="GO:0005737">
    <property type="term" value="C:cytoplasm"/>
    <property type="evidence" value="ECO:0007669"/>
    <property type="project" value="UniProtKB-SubCell"/>
</dbReference>
<dbReference type="GO" id="GO:0005524">
    <property type="term" value="F:ATP binding"/>
    <property type="evidence" value="ECO:0007669"/>
    <property type="project" value="UniProtKB-UniRule"/>
</dbReference>
<dbReference type="GO" id="GO:0003697">
    <property type="term" value="F:single-stranded DNA binding"/>
    <property type="evidence" value="ECO:0007669"/>
    <property type="project" value="UniProtKB-UniRule"/>
</dbReference>
<dbReference type="GO" id="GO:0006260">
    <property type="term" value="P:DNA replication"/>
    <property type="evidence" value="ECO:0007669"/>
    <property type="project" value="UniProtKB-UniRule"/>
</dbReference>
<dbReference type="GO" id="GO:0000731">
    <property type="term" value="P:DNA synthesis involved in DNA repair"/>
    <property type="evidence" value="ECO:0007669"/>
    <property type="project" value="TreeGrafter"/>
</dbReference>
<dbReference type="GO" id="GO:0006302">
    <property type="term" value="P:double-strand break repair"/>
    <property type="evidence" value="ECO:0007669"/>
    <property type="project" value="TreeGrafter"/>
</dbReference>
<dbReference type="GO" id="GO:0009432">
    <property type="term" value="P:SOS response"/>
    <property type="evidence" value="ECO:0007669"/>
    <property type="project" value="UniProtKB-UniRule"/>
</dbReference>
<dbReference type="FunFam" id="1.20.1050.90:FF:000003">
    <property type="entry name" value="DNA replication and repair protein RecF"/>
    <property type="match status" value="1"/>
</dbReference>
<dbReference type="Gene3D" id="3.40.50.300">
    <property type="entry name" value="P-loop containing nucleotide triphosphate hydrolases"/>
    <property type="match status" value="1"/>
</dbReference>
<dbReference type="Gene3D" id="1.20.1050.90">
    <property type="entry name" value="RecF/RecN/SMC, N-terminal domain"/>
    <property type="match status" value="1"/>
</dbReference>
<dbReference type="HAMAP" id="MF_00365">
    <property type="entry name" value="RecF"/>
    <property type="match status" value="1"/>
</dbReference>
<dbReference type="InterPro" id="IPR001238">
    <property type="entry name" value="DNA-binding_RecF"/>
</dbReference>
<dbReference type="InterPro" id="IPR018078">
    <property type="entry name" value="DNA-binding_RecF_CS"/>
</dbReference>
<dbReference type="InterPro" id="IPR027417">
    <property type="entry name" value="P-loop_NTPase"/>
</dbReference>
<dbReference type="InterPro" id="IPR003395">
    <property type="entry name" value="RecF/RecN/SMC_N"/>
</dbReference>
<dbReference type="InterPro" id="IPR042174">
    <property type="entry name" value="RecF_2"/>
</dbReference>
<dbReference type="NCBIfam" id="TIGR00611">
    <property type="entry name" value="recf"/>
    <property type="match status" value="1"/>
</dbReference>
<dbReference type="PANTHER" id="PTHR32182">
    <property type="entry name" value="DNA REPLICATION AND REPAIR PROTEIN RECF"/>
    <property type="match status" value="1"/>
</dbReference>
<dbReference type="PANTHER" id="PTHR32182:SF0">
    <property type="entry name" value="DNA REPLICATION AND REPAIR PROTEIN RECF"/>
    <property type="match status" value="1"/>
</dbReference>
<dbReference type="Pfam" id="PF02463">
    <property type="entry name" value="SMC_N"/>
    <property type="match status" value="1"/>
</dbReference>
<dbReference type="SUPFAM" id="SSF52540">
    <property type="entry name" value="P-loop containing nucleoside triphosphate hydrolases"/>
    <property type="match status" value="1"/>
</dbReference>
<dbReference type="PROSITE" id="PS00617">
    <property type="entry name" value="RECF_1"/>
    <property type="match status" value="1"/>
</dbReference>
<dbReference type="PROSITE" id="PS00618">
    <property type="entry name" value="RECF_2"/>
    <property type="match status" value="1"/>
</dbReference>
<sequence>MSLRRIMVTAVRNLHPVTLSPSPRINILYGANGSGKTSVLEAVHLLGLARSFRSTRLNPVIQYEQAACTVFGEVQLSEGGTSNLGVSRERAGDFTIRIDGQNAKSAAQLAELLPLQLINPDSFRLLEGAPKIRRQFLDWGVFHVEPRFMPAWQRLQKALRQRNSWLRHGTLDPASQAAWDRELCLASAEIDEYRRNYIKALKPVFEQTLSELVELDGLTLSYYRGWDKDRELNEVLASSLLRDQQMGHTQAGPQRADLRLRLAANNAADILSRGQQKLVVCALRIAQGHLVSQARRGHCIYLVDDLPSELDDQHRRALCRLLEELRCQVFITCVDHELLREGWQTETPVALFHVEQGRITQTHDHRE</sequence>
<name>RECF_PSEPW</name>
<gene>
    <name evidence="1" type="primary">recF</name>
    <name type="ordered locus">PputW619_0003</name>
</gene>
<feature type="chain" id="PRO_1000121141" description="DNA replication and repair protein RecF">
    <location>
        <begin position="1"/>
        <end position="367"/>
    </location>
</feature>
<feature type="binding site" evidence="1">
    <location>
        <begin position="30"/>
        <end position="37"/>
    </location>
    <ligand>
        <name>ATP</name>
        <dbReference type="ChEBI" id="CHEBI:30616"/>
    </ligand>
</feature>
<keyword id="KW-0067">ATP-binding</keyword>
<keyword id="KW-0963">Cytoplasm</keyword>
<keyword id="KW-0227">DNA damage</keyword>
<keyword id="KW-0234">DNA repair</keyword>
<keyword id="KW-0235">DNA replication</keyword>
<keyword id="KW-0238">DNA-binding</keyword>
<keyword id="KW-0547">Nucleotide-binding</keyword>
<keyword id="KW-0742">SOS response</keyword>
<accession>B1J3Y4</accession>
<comment type="function">
    <text evidence="1">The RecF protein is involved in DNA metabolism; it is required for DNA replication and normal SOS inducibility. RecF binds preferentially to single-stranded, linear DNA. It also seems to bind ATP.</text>
</comment>
<comment type="subcellular location">
    <subcellularLocation>
        <location evidence="1">Cytoplasm</location>
    </subcellularLocation>
</comment>
<comment type="similarity">
    <text evidence="1">Belongs to the RecF family.</text>
</comment>
<organism>
    <name type="scientific">Pseudomonas putida (strain W619)</name>
    <dbReference type="NCBI Taxonomy" id="390235"/>
    <lineage>
        <taxon>Bacteria</taxon>
        <taxon>Pseudomonadati</taxon>
        <taxon>Pseudomonadota</taxon>
        <taxon>Gammaproteobacteria</taxon>
        <taxon>Pseudomonadales</taxon>
        <taxon>Pseudomonadaceae</taxon>
        <taxon>Pseudomonas</taxon>
    </lineage>
</organism>
<evidence type="ECO:0000255" key="1">
    <source>
        <dbReference type="HAMAP-Rule" id="MF_00365"/>
    </source>
</evidence>